<organism>
    <name type="scientific">Bacillus pumilus (strain SAFR-032)</name>
    <dbReference type="NCBI Taxonomy" id="315750"/>
    <lineage>
        <taxon>Bacteria</taxon>
        <taxon>Bacillati</taxon>
        <taxon>Bacillota</taxon>
        <taxon>Bacilli</taxon>
        <taxon>Bacillales</taxon>
        <taxon>Bacillaceae</taxon>
        <taxon>Bacillus</taxon>
    </lineage>
</organism>
<reference key="1">
    <citation type="journal article" date="2007" name="PLoS ONE">
        <title>Paradoxical DNA repair and peroxide resistance gene conservation in Bacillus pumilus SAFR-032.</title>
        <authorList>
            <person name="Gioia J."/>
            <person name="Yerrapragada S."/>
            <person name="Qin X."/>
            <person name="Jiang H."/>
            <person name="Igboeli O.C."/>
            <person name="Muzny D."/>
            <person name="Dugan-Rocha S."/>
            <person name="Ding Y."/>
            <person name="Hawes A."/>
            <person name="Liu W."/>
            <person name="Perez L."/>
            <person name="Kovar C."/>
            <person name="Dinh H."/>
            <person name="Lee S."/>
            <person name="Nazareth L."/>
            <person name="Blyth P."/>
            <person name="Holder M."/>
            <person name="Buhay C."/>
            <person name="Tirumalai M.R."/>
            <person name="Liu Y."/>
            <person name="Dasgupta I."/>
            <person name="Bokhetache L."/>
            <person name="Fujita M."/>
            <person name="Karouia F."/>
            <person name="Eswara Moorthy P."/>
            <person name="Siefert J."/>
            <person name="Uzman A."/>
            <person name="Buzumbo P."/>
            <person name="Verma A."/>
            <person name="Zwiya H."/>
            <person name="McWilliams B.D."/>
            <person name="Olowu A."/>
            <person name="Clinkenbeard K.D."/>
            <person name="Newcombe D."/>
            <person name="Golebiewski L."/>
            <person name="Petrosino J.F."/>
            <person name="Nicholson W.L."/>
            <person name="Fox G.E."/>
            <person name="Venkateswaran K."/>
            <person name="Highlander S.K."/>
            <person name="Weinstock G.M."/>
        </authorList>
    </citation>
    <scope>NUCLEOTIDE SEQUENCE [LARGE SCALE GENOMIC DNA]</scope>
    <source>
        <strain>SAFR-032</strain>
    </source>
</reference>
<gene>
    <name type="ordered locus">BPUM_2255</name>
</gene>
<sequence>MEGWRISHLNEHKHERTIYVDADACPVKDEILSVASQFQIPVTFIASYEHFQTKRSPLEDWRFVDTHKEAADLVIANSVAAHDIVVTQDIGLASLLLPRQVIVLSERGRMYTNETIDFDLERRHVSSKQRRKGVYGKGPKKLLEEDKKRFIAQLQKILSNHEGFLN</sequence>
<evidence type="ECO:0000255" key="1">
    <source>
        <dbReference type="HAMAP-Rule" id="MF_00489"/>
    </source>
</evidence>
<comment type="similarity">
    <text evidence="1">Belongs to the UPF0178 family.</text>
</comment>
<proteinExistence type="inferred from homology"/>
<dbReference type="EMBL" id="CP000813">
    <property type="protein sequence ID" value="ABV62924.1"/>
    <property type="molecule type" value="Genomic_DNA"/>
</dbReference>
<dbReference type="RefSeq" id="WP_012010608.1">
    <property type="nucleotide sequence ID" value="NZ_VEIS01000005.1"/>
</dbReference>
<dbReference type="STRING" id="315750.BPUM_2255"/>
<dbReference type="GeneID" id="5621521"/>
<dbReference type="KEGG" id="bpu:BPUM_2255"/>
<dbReference type="eggNOG" id="COG1671">
    <property type="taxonomic scope" value="Bacteria"/>
</dbReference>
<dbReference type="HOGENOM" id="CLU_106619_0_0_9"/>
<dbReference type="OrthoDB" id="9798918at2"/>
<dbReference type="Proteomes" id="UP000001355">
    <property type="component" value="Chromosome"/>
</dbReference>
<dbReference type="CDD" id="cd18720">
    <property type="entry name" value="PIN_YqxD-like"/>
    <property type="match status" value="1"/>
</dbReference>
<dbReference type="HAMAP" id="MF_00489">
    <property type="entry name" value="UPF0178"/>
    <property type="match status" value="1"/>
</dbReference>
<dbReference type="InterPro" id="IPR003791">
    <property type="entry name" value="UPF0178"/>
</dbReference>
<dbReference type="NCBIfam" id="NF001095">
    <property type="entry name" value="PRK00124.1"/>
    <property type="match status" value="1"/>
</dbReference>
<dbReference type="PANTHER" id="PTHR35146">
    <property type="entry name" value="UPF0178 PROTEIN YAII"/>
    <property type="match status" value="1"/>
</dbReference>
<dbReference type="PANTHER" id="PTHR35146:SF1">
    <property type="entry name" value="UPF0178 PROTEIN YAII"/>
    <property type="match status" value="1"/>
</dbReference>
<dbReference type="Pfam" id="PF02639">
    <property type="entry name" value="DUF188"/>
    <property type="match status" value="1"/>
</dbReference>
<feature type="chain" id="PRO_1000060443" description="UPF0178 protein BPUM_2255">
    <location>
        <begin position="1"/>
        <end position="166"/>
    </location>
</feature>
<protein>
    <recommendedName>
        <fullName evidence="1">UPF0178 protein BPUM_2255</fullName>
    </recommendedName>
</protein>
<name>Y2255_BACP2</name>
<accession>A8FFA7</accession>